<accession>Q0AFW3</accession>
<keyword id="KW-0414">Isoprene biosynthesis</keyword>
<keyword id="KW-0548">Nucleotidyltransferase</keyword>
<keyword id="KW-0808">Transferase</keyword>
<sequence length="233" mass="25596">MVKFIALITAAGSGSRMGEDIPKQYRPLAGKPMIYHALRTLCGIARISTVCIVLAPEDTEWIRHNWREFAGKIQIFNCGGATRAESVTNGLKALRAANHVQDQDWILVHDAARPGLSTTLVERLLDQLADDEVGGLLAVPLADTLKRADDAGRVICTEPRERLWQAQTPQMFRMKLLLEALEKAPAGITDDASAVEALGLSPKLVVGNAYNFKVTYPQDLKLAELILRERAIT</sequence>
<protein>
    <recommendedName>
        <fullName evidence="1">2-C-methyl-D-erythritol 4-phosphate cytidylyltransferase</fullName>
        <ecNumber evidence="1">2.7.7.60</ecNumber>
    </recommendedName>
    <alternativeName>
        <fullName evidence="1">4-diphosphocytidyl-2C-methyl-D-erythritol synthase</fullName>
    </alternativeName>
    <alternativeName>
        <fullName evidence="1">MEP cytidylyltransferase</fullName>
        <shortName evidence="1">MCT</shortName>
    </alternativeName>
</protein>
<reference key="1">
    <citation type="journal article" date="2007" name="Environ. Microbiol.">
        <title>Whole-genome analysis of the ammonia-oxidizing bacterium, Nitrosomonas eutropha C91: implications for niche adaptation.</title>
        <authorList>
            <person name="Stein L.Y."/>
            <person name="Arp D.J."/>
            <person name="Berube P.M."/>
            <person name="Chain P.S."/>
            <person name="Hauser L."/>
            <person name="Jetten M.S."/>
            <person name="Klotz M.G."/>
            <person name="Larimer F.W."/>
            <person name="Norton J.M."/>
            <person name="Op den Camp H.J.M."/>
            <person name="Shin M."/>
            <person name="Wei X."/>
        </authorList>
    </citation>
    <scope>NUCLEOTIDE SEQUENCE [LARGE SCALE GENOMIC DNA]</scope>
    <source>
        <strain>DSM 101675 / C91 / Nm57</strain>
    </source>
</reference>
<dbReference type="EC" id="2.7.7.60" evidence="1"/>
<dbReference type="EMBL" id="CP000450">
    <property type="protein sequence ID" value="ABI59769.1"/>
    <property type="molecule type" value="Genomic_DNA"/>
</dbReference>
<dbReference type="RefSeq" id="WP_011634575.1">
    <property type="nucleotide sequence ID" value="NC_008344.1"/>
</dbReference>
<dbReference type="SMR" id="Q0AFW3"/>
<dbReference type="STRING" id="335283.Neut_1525"/>
<dbReference type="KEGG" id="net:Neut_1525"/>
<dbReference type="eggNOG" id="COG1211">
    <property type="taxonomic scope" value="Bacteria"/>
</dbReference>
<dbReference type="HOGENOM" id="CLU_061281_3_0_4"/>
<dbReference type="OrthoDB" id="9806837at2"/>
<dbReference type="UniPathway" id="UPA00056">
    <property type="reaction ID" value="UER00093"/>
</dbReference>
<dbReference type="Proteomes" id="UP000001966">
    <property type="component" value="Chromosome"/>
</dbReference>
<dbReference type="GO" id="GO:0050518">
    <property type="term" value="F:2-C-methyl-D-erythritol 4-phosphate cytidylyltransferase activity"/>
    <property type="evidence" value="ECO:0007669"/>
    <property type="project" value="UniProtKB-UniRule"/>
</dbReference>
<dbReference type="GO" id="GO:0019288">
    <property type="term" value="P:isopentenyl diphosphate biosynthetic process, methylerythritol 4-phosphate pathway"/>
    <property type="evidence" value="ECO:0007669"/>
    <property type="project" value="UniProtKB-UniRule"/>
</dbReference>
<dbReference type="CDD" id="cd02516">
    <property type="entry name" value="CDP-ME_synthetase"/>
    <property type="match status" value="1"/>
</dbReference>
<dbReference type="FunFam" id="3.90.550.10:FF:000003">
    <property type="entry name" value="2-C-methyl-D-erythritol 4-phosphate cytidylyltransferase"/>
    <property type="match status" value="1"/>
</dbReference>
<dbReference type="Gene3D" id="3.90.550.10">
    <property type="entry name" value="Spore Coat Polysaccharide Biosynthesis Protein SpsA, Chain A"/>
    <property type="match status" value="1"/>
</dbReference>
<dbReference type="HAMAP" id="MF_00108">
    <property type="entry name" value="IspD"/>
    <property type="match status" value="1"/>
</dbReference>
<dbReference type="InterPro" id="IPR001228">
    <property type="entry name" value="IspD"/>
</dbReference>
<dbReference type="InterPro" id="IPR034683">
    <property type="entry name" value="IspD/TarI"/>
</dbReference>
<dbReference type="InterPro" id="IPR050088">
    <property type="entry name" value="IspD/TarI_cytidylyltransf_bact"/>
</dbReference>
<dbReference type="InterPro" id="IPR018294">
    <property type="entry name" value="ISPD_synthase_CS"/>
</dbReference>
<dbReference type="InterPro" id="IPR029044">
    <property type="entry name" value="Nucleotide-diphossugar_trans"/>
</dbReference>
<dbReference type="NCBIfam" id="TIGR00453">
    <property type="entry name" value="ispD"/>
    <property type="match status" value="1"/>
</dbReference>
<dbReference type="PANTHER" id="PTHR32125">
    <property type="entry name" value="2-C-METHYL-D-ERYTHRITOL 4-PHOSPHATE CYTIDYLYLTRANSFERASE, CHLOROPLASTIC"/>
    <property type="match status" value="1"/>
</dbReference>
<dbReference type="PANTHER" id="PTHR32125:SF4">
    <property type="entry name" value="2-C-METHYL-D-ERYTHRITOL 4-PHOSPHATE CYTIDYLYLTRANSFERASE, CHLOROPLASTIC"/>
    <property type="match status" value="1"/>
</dbReference>
<dbReference type="Pfam" id="PF01128">
    <property type="entry name" value="IspD"/>
    <property type="match status" value="1"/>
</dbReference>
<dbReference type="SUPFAM" id="SSF53448">
    <property type="entry name" value="Nucleotide-diphospho-sugar transferases"/>
    <property type="match status" value="1"/>
</dbReference>
<dbReference type="PROSITE" id="PS01295">
    <property type="entry name" value="ISPD"/>
    <property type="match status" value="1"/>
</dbReference>
<evidence type="ECO:0000255" key="1">
    <source>
        <dbReference type="HAMAP-Rule" id="MF_00108"/>
    </source>
</evidence>
<gene>
    <name evidence="1" type="primary">ispD</name>
    <name type="ordered locus">Neut_1525</name>
</gene>
<feature type="chain" id="PRO_1000022934" description="2-C-methyl-D-erythritol 4-phosphate cytidylyltransferase">
    <location>
        <begin position="1"/>
        <end position="233"/>
    </location>
</feature>
<feature type="site" description="Transition state stabilizer" evidence="1">
    <location>
        <position position="16"/>
    </location>
</feature>
<feature type="site" description="Transition state stabilizer" evidence="1">
    <location>
        <position position="23"/>
    </location>
</feature>
<feature type="site" description="Positions MEP for the nucleophilic attack" evidence="1">
    <location>
        <position position="160"/>
    </location>
</feature>
<feature type="site" description="Positions MEP for the nucleophilic attack" evidence="1">
    <location>
        <position position="213"/>
    </location>
</feature>
<proteinExistence type="inferred from homology"/>
<organism>
    <name type="scientific">Nitrosomonas eutropha (strain DSM 101675 / C91 / Nm57)</name>
    <dbReference type="NCBI Taxonomy" id="335283"/>
    <lineage>
        <taxon>Bacteria</taxon>
        <taxon>Pseudomonadati</taxon>
        <taxon>Pseudomonadota</taxon>
        <taxon>Betaproteobacteria</taxon>
        <taxon>Nitrosomonadales</taxon>
        <taxon>Nitrosomonadaceae</taxon>
        <taxon>Nitrosomonas</taxon>
    </lineage>
</organism>
<name>ISPD_NITEC</name>
<comment type="function">
    <text evidence="1">Catalyzes the formation of 4-diphosphocytidyl-2-C-methyl-D-erythritol from CTP and 2-C-methyl-D-erythritol 4-phosphate (MEP).</text>
</comment>
<comment type="catalytic activity">
    <reaction evidence="1">
        <text>2-C-methyl-D-erythritol 4-phosphate + CTP + H(+) = 4-CDP-2-C-methyl-D-erythritol + diphosphate</text>
        <dbReference type="Rhea" id="RHEA:13429"/>
        <dbReference type="ChEBI" id="CHEBI:15378"/>
        <dbReference type="ChEBI" id="CHEBI:33019"/>
        <dbReference type="ChEBI" id="CHEBI:37563"/>
        <dbReference type="ChEBI" id="CHEBI:57823"/>
        <dbReference type="ChEBI" id="CHEBI:58262"/>
        <dbReference type="EC" id="2.7.7.60"/>
    </reaction>
</comment>
<comment type="pathway">
    <text evidence="1">Isoprenoid biosynthesis; isopentenyl diphosphate biosynthesis via DXP pathway; isopentenyl diphosphate from 1-deoxy-D-xylulose 5-phosphate: step 2/6.</text>
</comment>
<comment type="similarity">
    <text evidence="1">Belongs to the IspD/TarI cytidylyltransferase family. IspD subfamily.</text>
</comment>